<reference key="1">
    <citation type="submission" date="2008-02" db="EMBL/GenBank/DDBJ databases">
        <title>Complete sequence of Synechococcus sp. PCC 7002.</title>
        <authorList>
            <person name="Li T."/>
            <person name="Zhao J."/>
            <person name="Zhao C."/>
            <person name="Liu Z."/>
            <person name="Zhao F."/>
            <person name="Marquardt J."/>
            <person name="Nomura C.T."/>
            <person name="Persson S."/>
            <person name="Detter J.C."/>
            <person name="Richardson P.M."/>
            <person name="Lanz C."/>
            <person name="Schuster S.C."/>
            <person name="Wang J."/>
            <person name="Li S."/>
            <person name="Huang X."/>
            <person name="Cai T."/>
            <person name="Yu Z."/>
            <person name="Luo J."/>
            <person name="Zhao J."/>
            <person name="Bryant D.A."/>
        </authorList>
    </citation>
    <scope>NUCLEOTIDE SEQUENCE [LARGE SCALE GENOMIC DNA]</scope>
    <source>
        <strain>ATCC 27264 / PCC 7002 / PR-6</strain>
    </source>
</reference>
<evidence type="ECO:0000255" key="1">
    <source>
        <dbReference type="HAMAP-Rule" id="MF_00044"/>
    </source>
</evidence>
<comment type="function">
    <text evidence="1">Aspartyl-tRNA synthetase with relaxed tRNA specificity since it is able to aspartylate not only its cognate tRNA(Asp) but also tRNA(Asn). Reaction proceeds in two steps: L-aspartate is first activated by ATP to form Asp-AMP and then transferred to the acceptor end of tRNA(Asp/Asn).</text>
</comment>
<comment type="catalytic activity">
    <reaction evidence="1">
        <text>tRNA(Asx) + L-aspartate + ATP = L-aspartyl-tRNA(Asx) + AMP + diphosphate</text>
        <dbReference type="Rhea" id="RHEA:18349"/>
        <dbReference type="Rhea" id="RHEA-COMP:9710"/>
        <dbReference type="Rhea" id="RHEA-COMP:9711"/>
        <dbReference type="ChEBI" id="CHEBI:29991"/>
        <dbReference type="ChEBI" id="CHEBI:30616"/>
        <dbReference type="ChEBI" id="CHEBI:33019"/>
        <dbReference type="ChEBI" id="CHEBI:78442"/>
        <dbReference type="ChEBI" id="CHEBI:78516"/>
        <dbReference type="ChEBI" id="CHEBI:456215"/>
        <dbReference type="EC" id="6.1.1.23"/>
    </reaction>
</comment>
<comment type="subunit">
    <text evidence="1">Homodimer.</text>
</comment>
<comment type="subcellular location">
    <subcellularLocation>
        <location evidence="1">Cytoplasm</location>
    </subcellularLocation>
</comment>
<comment type="similarity">
    <text evidence="1">Belongs to the class-II aminoacyl-tRNA synthetase family. Type 1 subfamily.</text>
</comment>
<accession>B1XNY9</accession>
<feature type="chain" id="PRO_1000091054" description="Aspartate--tRNA(Asp/Asn) ligase">
    <location>
        <begin position="1"/>
        <end position="596"/>
    </location>
</feature>
<feature type="region of interest" description="Aspartate" evidence="1">
    <location>
        <begin position="203"/>
        <end position="206"/>
    </location>
</feature>
<feature type="binding site" evidence="1">
    <location>
        <position position="179"/>
    </location>
    <ligand>
        <name>L-aspartate</name>
        <dbReference type="ChEBI" id="CHEBI:29991"/>
    </ligand>
</feature>
<feature type="binding site" evidence="1">
    <location>
        <begin position="225"/>
        <end position="227"/>
    </location>
    <ligand>
        <name>ATP</name>
        <dbReference type="ChEBI" id="CHEBI:30616"/>
    </ligand>
</feature>
<feature type="binding site" evidence="1">
    <location>
        <position position="225"/>
    </location>
    <ligand>
        <name>L-aspartate</name>
        <dbReference type="ChEBI" id="CHEBI:29991"/>
    </ligand>
</feature>
<feature type="binding site" evidence="1">
    <location>
        <position position="234"/>
    </location>
    <ligand>
        <name>ATP</name>
        <dbReference type="ChEBI" id="CHEBI:30616"/>
    </ligand>
</feature>
<feature type="binding site" evidence="1">
    <location>
        <position position="459"/>
    </location>
    <ligand>
        <name>L-aspartate</name>
        <dbReference type="ChEBI" id="CHEBI:29991"/>
    </ligand>
</feature>
<feature type="binding site" evidence="1">
    <location>
        <position position="489"/>
    </location>
    <ligand>
        <name>ATP</name>
        <dbReference type="ChEBI" id="CHEBI:30616"/>
    </ligand>
</feature>
<feature type="binding site" evidence="1">
    <location>
        <position position="496"/>
    </location>
    <ligand>
        <name>L-aspartate</name>
        <dbReference type="ChEBI" id="CHEBI:29991"/>
    </ligand>
</feature>
<feature type="binding site" evidence="1">
    <location>
        <begin position="541"/>
        <end position="544"/>
    </location>
    <ligand>
        <name>ATP</name>
        <dbReference type="ChEBI" id="CHEBI:30616"/>
    </ligand>
</feature>
<feature type="site" description="Important for tRNA non-discrimination" evidence="1">
    <location>
        <position position="30"/>
    </location>
</feature>
<feature type="site" description="Important for tRNA non-discrimination" evidence="1">
    <location>
        <position position="82"/>
    </location>
</feature>
<keyword id="KW-0030">Aminoacyl-tRNA synthetase</keyword>
<keyword id="KW-0067">ATP-binding</keyword>
<keyword id="KW-0963">Cytoplasm</keyword>
<keyword id="KW-0436">Ligase</keyword>
<keyword id="KW-0547">Nucleotide-binding</keyword>
<keyword id="KW-0648">Protein biosynthesis</keyword>
<keyword id="KW-1185">Reference proteome</keyword>
<dbReference type="EC" id="6.1.1.23" evidence="1"/>
<dbReference type="EMBL" id="CP000951">
    <property type="protein sequence ID" value="ACA98432.1"/>
    <property type="molecule type" value="Genomic_DNA"/>
</dbReference>
<dbReference type="RefSeq" id="WP_012306056.1">
    <property type="nucleotide sequence ID" value="NZ_JAHHPU010000001.1"/>
</dbReference>
<dbReference type="SMR" id="B1XNY9"/>
<dbReference type="STRING" id="32049.SYNPCC7002_A0422"/>
<dbReference type="KEGG" id="syp:SYNPCC7002_A0422"/>
<dbReference type="eggNOG" id="COG0173">
    <property type="taxonomic scope" value="Bacteria"/>
</dbReference>
<dbReference type="HOGENOM" id="CLU_014330_3_2_3"/>
<dbReference type="Proteomes" id="UP000001688">
    <property type="component" value="Chromosome"/>
</dbReference>
<dbReference type="GO" id="GO:0005737">
    <property type="term" value="C:cytoplasm"/>
    <property type="evidence" value="ECO:0007669"/>
    <property type="project" value="UniProtKB-SubCell"/>
</dbReference>
<dbReference type="GO" id="GO:0004815">
    <property type="term" value="F:aspartate-tRNA ligase activity"/>
    <property type="evidence" value="ECO:0007669"/>
    <property type="project" value="UniProtKB-UniRule"/>
</dbReference>
<dbReference type="GO" id="GO:0050560">
    <property type="term" value="F:aspartate-tRNA(Asn) ligase activity"/>
    <property type="evidence" value="ECO:0007669"/>
    <property type="project" value="UniProtKB-EC"/>
</dbReference>
<dbReference type="GO" id="GO:0005524">
    <property type="term" value="F:ATP binding"/>
    <property type="evidence" value="ECO:0007669"/>
    <property type="project" value="UniProtKB-UniRule"/>
</dbReference>
<dbReference type="GO" id="GO:0003676">
    <property type="term" value="F:nucleic acid binding"/>
    <property type="evidence" value="ECO:0007669"/>
    <property type="project" value="InterPro"/>
</dbReference>
<dbReference type="GO" id="GO:0006422">
    <property type="term" value="P:aspartyl-tRNA aminoacylation"/>
    <property type="evidence" value="ECO:0007669"/>
    <property type="project" value="UniProtKB-UniRule"/>
</dbReference>
<dbReference type="CDD" id="cd00777">
    <property type="entry name" value="AspRS_core"/>
    <property type="match status" value="1"/>
</dbReference>
<dbReference type="CDD" id="cd04317">
    <property type="entry name" value="EcAspRS_like_N"/>
    <property type="match status" value="1"/>
</dbReference>
<dbReference type="Gene3D" id="3.30.930.10">
    <property type="entry name" value="Bira Bifunctional Protein, Domain 2"/>
    <property type="match status" value="1"/>
</dbReference>
<dbReference type="Gene3D" id="3.30.1360.30">
    <property type="entry name" value="GAD-like domain"/>
    <property type="match status" value="1"/>
</dbReference>
<dbReference type="Gene3D" id="2.40.50.140">
    <property type="entry name" value="Nucleic acid-binding proteins"/>
    <property type="match status" value="1"/>
</dbReference>
<dbReference type="HAMAP" id="MF_00044">
    <property type="entry name" value="Asp_tRNA_synth_type1"/>
    <property type="match status" value="1"/>
</dbReference>
<dbReference type="InterPro" id="IPR004364">
    <property type="entry name" value="Aa-tRNA-synt_II"/>
</dbReference>
<dbReference type="InterPro" id="IPR006195">
    <property type="entry name" value="aa-tRNA-synth_II"/>
</dbReference>
<dbReference type="InterPro" id="IPR045864">
    <property type="entry name" value="aa-tRNA-synth_II/BPL/LPL"/>
</dbReference>
<dbReference type="InterPro" id="IPR004524">
    <property type="entry name" value="Asp-tRNA-ligase_1"/>
</dbReference>
<dbReference type="InterPro" id="IPR047089">
    <property type="entry name" value="Asp-tRNA-ligase_1_N"/>
</dbReference>
<dbReference type="InterPro" id="IPR002312">
    <property type="entry name" value="Asp/Asn-tRNA-synth_IIb"/>
</dbReference>
<dbReference type="InterPro" id="IPR047090">
    <property type="entry name" value="AspRS_core"/>
</dbReference>
<dbReference type="InterPro" id="IPR004115">
    <property type="entry name" value="GAD-like_sf"/>
</dbReference>
<dbReference type="InterPro" id="IPR029351">
    <property type="entry name" value="GAD_dom"/>
</dbReference>
<dbReference type="InterPro" id="IPR012340">
    <property type="entry name" value="NA-bd_OB-fold"/>
</dbReference>
<dbReference type="InterPro" id="IPR004365">
    <property type="entry name" value="NA-bd_OB_tRNA"/>
</dbReference>
<dbReference type="NCBIfam" id="TIGR00459">
    <property type="entry name" value="aspS_bact"/>
    <property type="match status" value="1"/>
</dbReference>
<dbReference type="NCBIfam" id="NF001750">
    <property type="entry name" value="PRK00476.1"/>
    <property type="match status" value="1"/>
</dbReference>
<dbReference type="PANTHER" id="PTHR22594:SF5">
    <property type="entry name" value="ASPARTATE--TRNA LIGASE, MITOCHONDRIAL"/>
    <property type="match status" value="1"/>
</dbReference>
<dbReference type="PANTHER" id="PTHR22594">
    <property type="entry name" value="ASPARTYL/LYSYL-TRNA SYNTHETASE"/>
    <property type="match status" value="1"/>
</dbReference>
<dbReference type="Pfam" id="PF02938">
    <property type="entry name" value="GAD"/>
    <property type="match status" value="1"/>
</dbReference>
<dbReference type="Pfam" id="PF00152">
    <property type="entry name" value="tRNA-synt_2"/>
    <property type="match status" value="1"/>
</dbReference>
<dbReference type="Pfam" id="PF01336">
    <property type="entry name" value="tRNA_anti-codon"/>
    <property type="match status" value="1"/>
</dbReference>
<dbReference type="PRINTS" id="PR01042">
    <property type="entry name" value="TRNASYNTHASP"/>
</dbReference>
<dbReference type="SUPFAM" id="SSF55681">
    <property type="entry name" value="Class II aaRS and biotin synthetases"/>
    <property type="match status" value="1"/>
</dbReference>
<dbReference type="SUPFAM" id="SSF55261">
    <property type="entry name" value="GAD domain-like"/>
    <property type="match status" value="1"/>
</dbReference>
<dbReference type="SUPFAM" id="SSF50249">
    <property type="entry name" value="Nucleic acid-binding proteins"/>
    <property type="match status" value="1"/>
</dbReference>
<dbReference type="PROSITE" id="PS50862">
    <property type="entry name" value="AA_TRNA_LIGASE_II"/>
    <property type="match status" value="1"/>
</dbReference>
<sequence>MRTHYCGDLRSEHIDQTVTLYGWVDRRRDHGGVIFIDLRDRTGIVQIVSDPQRTPDSYNDADASRSEYVVKIVGKVSARQEGAKNPKLPTGEVEIYADTIEILNGVHKQLPILVSSSADGDQVKEDLRLKYRYLDLRRETMAKNLQLRHTVVKSMRRFLEDDENFMEVETPILTRSTPEGARDYLVPSRVNPGDWYALPQSPQLFKQLLMVAGCDRYYQIARCFRDEDLRADRQPEFTQLDMEMSFMSFDEIIDLNERLICRIFQDAQGIELERPFPRITYAESMEKYGCDRPDTRFGLELVNVSDIVADMGFKVFSGAVKSGGQVKVLPIPNGNDAISNVRIKPGGDLFNAAVEMGAKGLAFIRVREDGAIDTIGAIKDNLSDAQKQELLSRTGAEAGTLLLFGAGATDIVNKSLDRVRQLVGAEMGLINENQLNFVWVTDFPMFEYNSDEKRLEALHHPFTAPNPEDLEDLATARALAYDIVLNGIEIGGGSLRIYQREVQEKVFQTIGLSETEAQEKFGFLLEAFEYGTPPHGGIAYGLDRLVMLMAQEDSIRDVIAFPKTQQASCLLTDAPAGVDQKQLKELFVASTAPEKD</sequence>
<proteinExistence type="inferred from homology"/>
<organism>
    <name type="scientific">Picosynechococcus sp. (strain ATCC 27264 / PCC 7002 / PR-6)</name>
    <name type="common">Agmenellum quadruplicatum</name>
    <dbReference type="NCBI Taxonomy" id="32049"/>
    <lineage>
        <taxon>Bacteria</taxon>
        <taxon>Bacillati</taxon>
        <taxon>Cyanobacteriota</taxon>
        <taxon>Cyanophyceae</taxon>
        <taxon>Oscillatoriophycideae</taxon>
        <taxon>Chroococcales</taxon>
        <taxon>Geminocystaceae</taxon>
        <taxon>Picosynechococcus</taxon>
    </lineage>
</organism>
<name>SYDND_PICP2</name>
<gene>
    <name evidence="1" type="primary">aspS</name>
    <name type="ordered locus">SYNPCC7002_A0422</name>
</gene>
<protein>
    <recommendedName>
        <fullName evidence="1">Aspartate--tRNA(Asp/Asn) ligase</fullName>
        <ecNumber evidence="1">6.1.1.23</ecNumber>
    </recommendedName>
    <alternativeName>
        <fullName evidence="1">Aspartyl-tRNA synthetase</fullName>
        <shortName evidence="1">AspRS</shortName>
    </alternativeName>
    <alternativeName>
        <fullName evidence="1">Non-discriminating aspartyl-tRNA synthetase</fullName>
        <shortName evidence="1">ND-AspRS</shortName>
    </alternativeName>
</protein>